<gene>
    <name evidence="1" type="primary">atpD</name>
    <name evidence="1" type="synonym">atpB</name>
    <name type="ordered locus">MAE_00920</name>
</gene>
<keyword id="KW-0066">ATP synthesis</keyword>
<keyword id="KW-0067">ATP-binding</keyword>
<keyword id="KW-0139">CF(1)</keyword>
<keyword id="KW-0375">Hydrogen ion transport</keyword>
<keyword id="KW-0406">Ion transport</keyword>
<keyword id="KW-0472">Membrane</keyword>
<keyword id="KW-0547">Nucleotide-binding</keyword>
<keyword id="KW-0793">Thylakoid</keyword>
<keyword id="KW-1278">Translocase</keyword>
<keyword id="KW-0813">Transport</keyword>
<name>ATPB_MICAN</name>
<protein>
    <recommendedName>
        <fullName evidence="1">ATP synthase subunit beta</fullName>
        <ecNumber evidence="1">7.1.2.2</ecNumber>
    </recommendedName>
    <alternativeName>
        <fullName evidence="1">ATP synthase F1 sector subunit beta</fullName>
    </alternativeName>
    <alternativeName>
        <fullName evidence="1">F-ATPase subunit beta</fullName>
    </alternativeName>
</protein>
<accession>B0JFM7</accession>
<organism>
    <name type="scientific">Microcystis aeruginosa (strain NIES-843 / IAM M-2473)</name>
    <dbReference type="NCBI Taxonomy" id="449447"/>
    <lineage>
        <taxon>Bacteria</taxon>
        <taxon>Bacillati</taxon>
        <taxon>Cyanobacteriota</taxon>
        <taxon>Cyanophyceae</taxon>
        <taxon>Oscillatoriophycideae</taxon>
        <taxon>Chroococcales</taxon>
        <taxon>Microcystaceae</taxon>
        <taxon>Microcystis</taxon>
    </lineage>
</organism>
<comment type="function">
    <text evidence="1">Produces ATP from ADP in the presence of a proton gradient across the membrane. The catalytic sites are hosted primarily by the beta subunits.</text>
</comment>
<comment type="catalytic activity">
    <reaction evidence="1">
        <text>ATP + H2O + 4 H(+)(in) = ADP + phosphate + 5 H(+)(out)</text>
        <dbReference type="Rhea" id="RHEA:57720"/>
        <dbReference type="ChEBI" id="CHEBI:15377"/>
        <dbReference type="ChEBI" id="CHEBI:15378"/>
        <dbReference type="ChEBI" id="CHEBI:30616"/>
        <dbReference type="ChEBI" id="CHEBI:43474"/>
        <dbReference type="ChEBI" id="CHEBI:456216"/>
        <dbReference type="EC" id="7.1.2.2"/>
    </reaction>
</comment>
<comment type="subunit">
    <text evidence="1">F-type ATPases have 2 components, CF(1) - the catalytic core - and CF(0) - the membrane proton channel. CF(1) has five subunits: alpha(3), beta(3), gamma(1), delta(1), epsilon(1). CF(0) has four main subunits: a(1), b(1), b'(1) and c(9-12).</text>
</comment>
<comment type="subcellular location">
    <subcellularLocation>
        <location evidence="1">Cellular thylakoid membrane</location>
        <topology evidence="1">Peripheral membrane protein</topology>
    </subcellularLocation>
</comment>
<comment type="similarity">
    <text evidence="1">Belongs to the ATPase alpha/beta chains family.</text>
</comment>
<sequence>MVATTETNVGKIVQIIGPVIDAEFPSGKLPRIYNALTVKGTNSAGQNLSVTCEVQQLLGDNQVRAVAMSTTDGLVRGMDIVDTGAAISVPVGKCTLGRIFNVLGEPVDEKGPVNVTETSPIHRPAPKLVDLEVTPTVFETGIKVIDLLTPYRQGGKIGLFGGAGVGKTVIMMELINNIAIQHGGVSVFGGVGERTREGNDLYNEMIESKVINADNPEDSKIALVYGQMNEPPGARMRVGLSALTMAEYFRDVSKQDVLLFIDNIFRFVQAGSEVSALLGRMPSAVGYQPTLGTDVGDLQERITSTKEGSITSIQAVYVPADDLTDPAPATTFAHLDGTTVLSRGLASKGIYPAVDPLGSTSTMLQADIVGDEHYGTARAVQSTLQRYKELQDIIAILGLDELSEEDRLTVDRARKIERFLSQPFFVAEVFTGSPGKYVTLADTIKGFQMILKGELDSLPEQAFYMVGSIDEAIAKGEKLKKG</sequence>
<reference key="1">
    <citation type="journal article" date="2007" name="DNA Res.">
        <title>Complete genomic structure of the bloom-forming toxic cyanobacterium Microcystis aeruginosa NIES-843.</title>
        <authorList>
            <person name="Kaneko T."/>
            <person name="Nakajima N."/>
            <person name="Okamoto S."/>
            <person name="Suzuki I."/>
            <person name="Tanabe Y."/>
            <person name="Tamaoki M."/>
            <person name="Nakamura Y."/>
            <person name="Kasai F."/>
            <person name="Watanabe A."/>
            <person name="Kawashima K."/>
            <person name="Kishida Y."/>
            <person name="Ono A."/>
            <person name="Shimizu Y."/>
            <person name="Takahashi C."/>
            <person name="Minami C."/>
            <person name="Fujishiro T."/>
            <person name="Kohara M."/>
            <person name="Katoh M."/>
            <person name="Nakazaki N."/>
            <person name="Nakayama S."/>
            <person name="Yamada M."/>
            <person name="Tabata S."/>
            <person name="Watanabe M.M."/>
        </authorList>
    </citation>
    <scope>NUCLEOTIDE SEQUENCE [LARGE SCALE GENOMIC DNA]</scope>
    <source>
        <strain>NIES-843 / IAM M-247</strain>
    </source>
</reference>
<evidence type="ECO:0000255" key="1">
    <source>
        <dbReference type="HAMAP-Rule" id="MF_01347"/>
    </source>
</evidence>
<dbReference type="EC" id="7.1.2.2" evidence="1"/>
<dbReference type="EMBL" id="AP009552">
    <property type="protein sequence ID" value="BAF99913.1"/>
    <property type="molecule type" value="Genomic_DNA"/>
</dbReference>
<dbReference type="RefSeq" id="WP_012263845.1">
    <property type="nucleotide sequence ID" value="NC_010296.1"/>
</dbReference>
<dbReference type="SMR" id="B0JFM7"/>
<dbReference type="STRING" id="449447.MAE_00920"/>
<dbReference type="PaxDb" id="449447-MAE_00920"/>
<dbReference type="EnsemblBacteria" id="BAF99913">
    <property type="protein sequence ID" value="BAF99913"/>
    <property type="gene ID" value="MAE_00920"/>
</dbReference>
<dbReference type="KEGG" id="mar:MAE_00920"/>
<dbReference type="PATRIC" id="fig|449447.4.peg.84"/>
<dbReference type="eggNOG" id="COG0055">
    <property type="taxonomic scope" value="Bacteria"/>
</dbReference>
<dbReference type="HOGENOM" id="CLU_022398_0_2_3"/>
<dbReference type="BioCyc" id="MAER449447:MAE_RS00390-MONOMER"/>
<dbReference type="Proteomes" id="UP000001510">
    <property type="component" value="Chromosome"/>
</dbReference>
<dbReference type="GO" id="GO:0031676">
    <property type="term" value="C:plasma membrane-derived thylakoid membrane"/>
    <property type="evidence" value="ECO:0007669"/>
    <property type="project" value="UniProtKB-SubCell"/>
</dbReference>
<dbReference type="GO" id="GO:0045259">
    <property type="term" value="C:proton-transporting ATP synthase complex"/>
    <property type="evidence" value="ECO:0007669"/>
    <property type="project" value="UniProtKB-KW"/>
</dbReference>
<dbReference type="GO" id="GO:0005524">
    <property type="term" value="F:ATP binding"/>
    <property type="evidence" value="ECO:0007669"/>
    <property type="project" value="UniProtKB-UniRule"/>
</dbReference>
<dbReference type="GO" id="GO:0016887">
    <property type="term" value="F:ATP hydrolysis activity"/>
    <property type="evidence" value="ECO:0007669"/>
    <property type="project" value="InterPro"/>
</dbReference>
<dbReference type="GO" id="GO:0046933">
    <property type="term" value="F:proton-transporting ATP synthase activity, rotational mechanism"/>
    <property type="evidence" value="ECO:0007669"/>
    <property type="project" value="UniProtKB-UniRule"/>
</dbReference>
<dbReference type="CDD" id="cd18110">
    <property type="entry name" value="ATP-synt_F1_beta_C"/>
    <property type="match status" value="1"/>
</dbReference>
<dbReference type="CDD" id="cd18115">
    <property type="entry name" value="ATP-synt_F1_beta_N"/>
    <property type="match status" value="1"/>
</dbReference>
<dbReference type="CDD" id="cd01133">
    <property type="entry name" value="F1-ATPase_beta_CD"/>
    <property type="match status" value="1"/>
</dbReference>
<dbReference type="FunFam" id="1.10.1140.10:FF:000001">
    <property type="entry name" value="ATP synthase subunit beta"/>
    <property type="match status" value="1"/>
</dbReference>
<dbReference type="FunFam" id="3.40.50.12240:FF:000006">
    <property type="entry name" value="ATP synthase subunit beta"/>
    <property type="match status" value="1"/>
</dbReference>
<dbReference type="FunFam" id="3.40.50.300:FF:000004">
    <property type="entry name" value="ATP synthase subunit beta"/>
    <property type="match status" value="1"/>
</dbReference>
<dbReference type="FunFam" id="2.40.10.170:FF:000002">
    <property type="entry name" value="ATP synthase subunit beta, chloroplastic"/>
    <property type="match status" value="1"/>
</dbReference>
<dbReference type="Gene3D" id="2.40.10.170">
    <property type="match status" value="1"/>
</dbReference>
<dbReference type="Gene3D" id="1.10.1140.10">
    <property type="entry name" value="Bovine Mitochondrial F1-atpase, Atp Synthase Beta Chain, Chain D, domain 3"/>
    <property type="match status" value="1"/>
</dbReference>
<dbReference type="Gene3D" id="3.40.50.300">
    <property type="entry name" value="P-loop containing nucleotide triphosphate hydrolases"/>
    <property type="match status" value="1"/>
</dbReference>
<dbReference type="HAMAP" id="MF_01347">
    <property type="entry name" value="ATP_synth_beta_bact"/>
    <property type="match status" value="1"/>
</dbReference>
<dbReference type="InterPro" id="IPR003593">
    <property type="entry name" value="AAA+_ATPase"/>
</dbReference>
<dbReference type="InterPro" id="IPR055190">
    <property type="entry name" value="ATP-synt_VA_C"/>
</dbReference>
<dbReference type="InterPro" id="IPR005722">
    <property type="entry name" value="ATP_synth_F1_bsu"/>
</dbReference>
<dbReference type="InterPro" id="IPR020003">
    <property type="entry name" value="ATPase_a/bsu_AS"/>
</dbReference>
<dbReference type="InterPro" id="IPR050053">
    <property type="entry name" value="ATPase_alpha/beta_chains"/>
</dbReference>
<dbReference type="InterPro" id="IPR004100">
    <property type="entry name" value="ATPase_F1/V1/A1_a/bsu_N"/>
</dbReference>
<dbReference type="InterPro" id="IPR036121">
    <property type="entry name" value="ATPase_F1/V1/A1_a/bsu_N_sf"/>
</dbReference>
<dbReference type="InterPro" id="IPR000194">
    <property type="entry name" value="ATPase_F1/V1/A1_a/bsu_nucl-bd"/>
</dbReference>
<dbReference type="InterPro" id="IPR024034">
    <property type="entry name" value="ATPase_F1/V1_b/a_C"/>
</dbReference>
<dbReference type="InterPro" id="IPR027417">
    <property type="entry name" value="P-loop_NTPase"/>
</dbReference>
<dbReference type="NCBIfam" id="TIGR01039">
    <property type="entry name" value="atpD"/>
    <property type="match status" value="1"/>
</dbReference>
<dbReference type="PANTHER" id="PTHR15184">
    <property type="entry name" value="ATP SYNTHASE"/>
    <property type="match status" value="1"/>
</dbReference>
<dbReference type="PANTHER" id="PTHR15184:SF71">
    <property type="entry name" value="ATP SYNTHASE SUBUNIT BETA, MITOCHONDRIAL"/>
    <property type="match status" value="1"/>
</dbReference>
<dbReference type="Pfam" id="PF00006">
    <property type="entry name" value="ATP-synt_ab"/>
    <property type="match status" value="1"/>
</dbReference>
<dbReference type="Pfam" id="PF02874">
    <property type="entry name" value="ATP-synt_ab_N"/>
    <property type="match status" value="1"/>
</dbReference>
<dbReference type="Pfam" id="PF22919">
    <property type="entry name" value="ATP-synt_VA_C"/>
    <property type="match status" value="1"/>
</dbReference>
<dbReference type="SMART" id="SM00382">
    <property type="entry name" value="AAA"/>
    <property type="match status" value="1"/>
</dbReference>
<dbReference type="SUPFAM" id="SSF47917">
    <property type="entry name" value="C-terminal domain of alpha and beta subunits of F1 ATP synthase"/>
    <property type="match status" value="1"/>
</dbReference>
<dbReference type="SUPFAM" id="SSF50615">
    <property type="entry name" value="N-terminal domain of alpha and beta subunits of F1 ATP synthase"/>
    <property type="match status" value="1"/>
</dbReference>
<dbReference type="SUPFAM" id="SSF52540">
    <property type="entry name" value="P-loop containing nucleoside triphosphate hydrolases"/>
    <property type="match status" value="1"/>
</dbReference>
<dbReference type="PROSITE" id="PS00152">
    <property type="entry name" value="ATPASE_ALPHA_BETA"/>
    <property type="match status" value="1"/>
</dbReference>
<proteinExistence type="inferred from homology"/>
<feature type="chain" id="PRO_0000339546" description="ATP synthase subunit beta">
    <location>
        <begin position="1"/>
        <end position="482"/>
    </location>
</feature>
<feature type="binding site" evidence="1">
    <location>
        <begin position="161"/>
        <end position="168"/>
    </location>
    <ligand>
        <name>ATP</name>
        <dbReference type="ChEBI" id="CHEBI:30616"/>
    </ligand>
</feature>